<sequence>MKIHAILVVAFLVLMKTAVSQDNNPLEHCRDVFVSFMPCMGFVEGIFQQPSPDCCRGVTHLNNVVKFTSPGSRNRQDSGETERVCLCIEIMGNANHLPFLPAAINNLPLRCSLTLSFPISVDMDCSQFRNTKNPDVEKLN</sequence>
<protein>
    <recommendedName>
        <fullName evidence="5">Protein ARABIDOPSIS THALIANA ANTHER 7</fullName>
        <shortName evidence="5">AtA7</shortName>
    </recommendedName>
    <alternativeName>
        <fullName evidence="4">Non-specific lipid transfer protein Y.4</fullName>
        <shortName evidence="4">AtLtpY.4</shortName>
    </alternativeName>
</protein>
<organism>
    <name type="scientific">Arabidopsis thaliana</name>
    <name type="common">Mouse-ear cress</name>
    <dbReference type="NCBI Taxonomy" id="3702"/>
    <lineage>
        <taxon>Eukaryota</taxon>
        <taxon>Viridiplantae</taxon>
        <taxon>Streptophyta</taxon>
        <taxon>Embryophyta</taxon>
        <taxon>Tracheophyta</taxon>
        <taxon>Spermatophyta</taxon>
        <taxon>Magnoliopsida</taxon>
        <taxon>eudicotyledons</taxon>
        <taxon>Gunneridae</taxon>
        <taxon>Pentapetalae</taxon>
        <taxon>rosids</taxon>
        <taxon>malvids</taxon>
        <taxon>Brassicales</taxon>
        <taxon>Brassicaceae</taxon>
        <taxon>Camelineae</taxon>
        <taxon>Arabidopsis</taxon>
    </lineage>
</organism>
<reference key="1">
    <citation type="journal article" date="1998" name="Plant Mol. Biol.">
        <title>Identification, sequence analysis and expression studies of novel anther-specific genes of Arabidopsis thaliana.</title>
        <authorList>
            <person name="Rubinelli P."/>
            <person name="Hu Y."/>
            <person name="Ma H."/>
        </authorList>
    </citation>
    <scope>NUCLEOTIDE SEQUENCE [MRNA] (ISOFORM 1)</scope>
    <scope>TISSUE SPECIFICITY</scope>
    <source>
        <strain>cv. Landsberg erecta</strain>
    </source>
</reference>
<reference key="2">
    <citation type="journal article" date="1999" name="Nature">
        <title>Sequence and analysis of chromosome 4 of the plant Arabidopsis thaliana.</title>
        <authorList>
            <person name="Mayer K.F.X."/>
            <person name="Schueller C."/>
            <person name="Wambutt R."/>
            <person name="Murphy G."/>
            <person name="Volckaert G."/>
            <person name="Pohl T."/>
            <person name="Duesterhoeft A."/>
            <person name="Stiekema W."/>
            <person name="Entian K.-D."/>
            <person name="Terryn N."/>
            <person name="Harris B."/>
            <person name="Ansorge W."/>
            <person name="Brandt P."/>
            <person name="Grivell L.A."/>
            <person name="Rieger M."/>
            <person name="Weichselgartner M."/>
            <person name="de Simone V."/>
            <person name="Obermaier B."/>
            <person name="Mache R."/>
            <person name="Mueller M."/>
            <person name="Kreis M."/>
            <person name="Delseny M."/>
            <person name="Puigdomenech P."/>
            <person name="Watson M."/>
            <person name="Schmidtheini T."/>
            <person name="Reichert B."/>
            <person name="Portetelle D."/>
            <person name="Perez-Alonso M."/>
            <person name="Boutry M."/>
            <person name="Bancroft I."/>
            <person name="Vos P."/>
            <person name="Hoheisel J."/>
            <person name="Zimmermann W."/>
            <person name="Wedler H."/>
            <person name="Ridley P."/>
            <person name="Langham S.-A."/>
            <person name="McCullagh B."/>
            <person name="Bilham L."/>
            <person name="Robben J."/>
            <person name="van der Schueren J."/>
            <person name="Grymonprez B."/>
            <person name="Chuang Y.-J."/>
            <person name="Vandenbussche F."/>
            <person name="Braeken M."/>
            <person name="Weltjens I."/>
            <person name="Voet M."/>
            <person name="Bastiaens I."/>
            <person name="Aert R."/>
            <person name="Defoor E."/>
            <person name="Weitzenegger T."/>
            <person name="Bothe G."/>
            <person name="Ramsperger U."/>
            <person name="Hilbert H."/>
            <person name="Braun M."/>
            <person name="Holzer E."/>
            <person name="Brandt A."/>
            <person name="Peters S."/>
            <person name="van Staveren M."/>
            <person name="Dirkse W."/>
            <person name="Mooijman P."/>
            <person name="Klein Lankhorst R."/>
            <person name="Rose M."/>
            <person name="Hauf J."/>
            <person name="Koetter P."/>
            <person name="Berneiser S."/>
            <person name="Hempel S."/>
            <person name="Feldpausch M."/>
            <person name="Lamberth S."/>
            <person name="Van den Daele H."/>
            <person name="De Keyser A."/>
            <person name="Buysshaert C."/>
            <person name="Gielen J."/>
            <person name="Villarroel R."/>
            <person name="De Clercq R."/>
            <person name="van Montagu M."/>
            <person name="Rogers J."/>
            <person name="Cronin A."/>
            <person name="Quail M.A."/>
            <person name="Bray-Allen S."/>
            <person name="Clark L."/>
            <person name="Doggett J."/>
            <person name="Hall S."/>
            <person name="Kay M."/>
            <person name="Lennard N."/>
            <person name="McLay K."/>
            <person name="Mayes R."/>
            <person name="Pettett A."/>
            <person name="Rajandream M.A."/>
            <person name="Lyne M."/>
            <person name="Benes V."/>
            <person name="Rechmann S."/>
            <person name="Borkova D."/>
            <person name="Bloecker H."/>
            <person name="Scharfe M."/>
            <person name="Grimm M."/>
            <person name="Loehnert T.-H."/>
            <person name="Dose S."/>
            <person name="de Haan M."/>
            <person name="Maarse A.C."/>
            <person name="Schaefer M."/>
            <person name="Mueller-Auer S."/>
            <person name="Gabel C."/>
            <person name="Fuchs M."/>
            <person name="Fartmann B."/>
            <person name="Granderath K."/>
            <person name="Dauner D."/>
            <person name="Herzl A."/>
            <person name="Neumann S."/>
            <person name="Argiriou A."/>
            <person name="Vitale D."/>
            <person name="Liguori R."/>
            <person name="Piravandi E."/>
            <person name="Massenet O."/>
            <person name="Quigley F."/>
            <person name="Clabauld G."/>
            <person name="Muendlein A."/>
            <person name="Felber R."/>
            <person name="Schnabl S."/>
            <person name="Hiller R."/>
            <person name="Schmidt W."/>
            <person name="Lecharny A."/>
            <person name="Aubourg S."/>
            <person name="Chefdor F."/>
            <person name="Cooke R."/>
            <person name="Berger C."/>
            <person name="Monfort A."/>
            <person name="Casacuberta E."/>
            <person name="Gibbons T."/>
            <person name="Weber N."/>
            <person name="Vandenbol M."/>
            <person name="Bargues M."/>
            <person name="Terol J."/>
            <person name="Torres A."/>
            <person name="Perez-Perez A."/>
            <person name="Purnelle B."/>
            <person name="Bent E."/>
            <person name="Johnson S."/>
            <person name="Tacon D."/>
            <person name="Jesse T."/>
            <person name="Heijnen L."/>
            <person name="Schwarz S."/>
            <person name="Scholler P."/>
            <person name="Heber S."/>
            <person name="Francs P."/>
            <person name="Bielke C."/>
            <person name="Frishman D."/>
            <person name="Haase D."/>
            <person name="Lemcke K."/>
            <person name="Mewes H.-W."/>
            <person name="Stocker S."/>
            <person name="Zaccaria P."/>
            <person name="Bevan M."/>
            <person name="Wilson R.K."/>
            <person name="de la Bastide M."/>
            <person name="Habermann K."/>
            <person name="Parnell L."/>
            <person name="Dedhia N."/>
            <person name="Gnoj L."/>
            <person name="Schutz K."/>
            <person name="Huang E."/>
            <person name="Spiegel L."/>
            <person name="Sekhon M."/>
            <person name="Murray J."/>
            <person name="Sheet P."/>
            <person name="Cordes M."/>
            <person name="Abu-Threideh J."/>
            <person name="Stoneking T."/>
            <person name="Kalicki J."/>
            <person name="Graves T."/>
            <person name="Harmon G."/>
            <person name="Edwards J."/>
            <person name="Latreille P."/>
            <person name="Courtney L."/>
            <person name="Cloud J."/>
            <person name="Abbott A."/>
            <person name="Scott K."/>
            <person name="Johnson D."/>
            <person name="Minx P."/>
            <person name="Bentley D."/>
            <person name="Fulton B."/>
            <person name="Miller N."/>
            <person name="Greco T."/>
            <person name="Kemp K."/>
            <person name="Kramer J."/>
            <person name="Fulton L."/>
            <person name="Mardis E."/>
            <person name="Dante M."/>
            <person name="Pepin K."/>
            <person name="Hillier L.W."/>
            <person name="Nelson J."/>
            <person name="Spieth J."/>
            <person name="Ryan E."/>
            <person name="Andrews S."/>
            <person name="Geisel C."/>
            <person name="Layman D."/>
            <person name="Du H."/>
            <person name="Ali J."/>
            <person name="Berghoff A."/>
            <person name="Jones K."/>
            <person name="Drone K."/>
            <person name="Cotton M."/>
            <person name="Joshu C."/>
            <person name="Antonoiu B."/>
            <person name="Zidanic M."/>
            <person name="Strong C."/>
            <person name="Sun H."/>
            <person name="Lamar B."/>
            <person name="Yordan C."/>
            <person name="Ma P."/>
            <person name="Zhong J."/>
            <person name="Preston R."/>
            <person name="Vil D."/>
            <person name="Shekher M."/>
            <person name="Matero A."/>
            <person name="Shah R."/>
            <person name="Swaby I.K."/>
            <person name="O'Shaughnessy A."/>
            <person name="Rodriguez M."/>
            <person name="Hoffman J."/>
            <person name="Till S."/>
            <person name="Granat S."/>
            <person name="Shohdy N."/>
            <person name="Hasegawa A."/>
            <person name="Hameed A."/>
            <person name="Lodhi M."/>
            <person name="Johnson A."/>
            <person name="Chen E."/>
            <person name="Marra M.A."/>
            <person name="Martienssen R."/>
            <person name="McCombie W.R."/>
        </authorList>
    </citation>
    <scope>NUCLEOTIDE SEQUENCE [LARGE SCALE GENOMIC DNA]</scope>
    <source>
        <strain>cv. Columbia</strain>
    </source>
</reference>
<reference key="3">
    <citation type="journal article" date="2017" name="Plant J.">
        <title>Araport11: a complete reannotation of the Arabidopsis thaliana reference genome.</title>
        <authorList>
            <person name="Cheng C.Y."/>
            <person name="Krishnakumar V."/>
            <person name="Chan A.P."/>
            <person name="Thibaud-Nissen F."/>
            <person name="Schobel S."/>
            <person name="Town C.D."/>
        </authorList>
    </citation>
    <scope>GENOME REANNOTATION</scope>
    <source>
        <strain>cv. Columbia</strain>
    </source>
</reference>
<reference key="4">
    <citation type="submission" date="2002-03" db="EMBL/GenBank/DDBJ databases">
        <title>Full-length cDNA from Arabidopsis thaliana.</title>
        <authorList>
            <person name="Brover V.V."/>
            <person name="Troukhan M.E."/>
            <person name="Alexandrov N.A."/>
            <person name="Lu Y.-P."/>
            <person name="Flavell R.B."/>
            <person name="Feldmann K.A."/>
        </authorList>
    </citation>
    <scope>NUCLEOTIDE SEQUENCE [LARGE SCALE MRNA] (ISOFORM 1)</scope>
</reference>
<reference key="5">
    <citation type="journal article" date="2008" name="BMC Genomics">
        <title>Genome-wide analysis of the rice and Arabidopsis non-specific lipid transfer protein (nsLtp) gene families and identification of wheat nsLtp genes by EST data mining.</title>
        <authorList>
            <person name="Boutrot F."/>
            <person name="Chantret N."/>
            <person name="Gautier M.F."/>
        </authorList>
    </citation>
    <scope>GENE FAMILY</scope>
</reference>
<reference key="6">
    <citation type="journal article" date="2013" name="Arabidopsis Book">
        <title>Acyl-lipid metabolism.</title>
        <authorList>
            <person name="Li-Beisson Y."/>
            <person name="Shorrosh B."/>
            <person name="Beisson F."/>
            <person name="Andersson M.X."/>
            <person name="Arondel V."/>
            <person name="Bates P.D."/>
            <person name="Baud S."/>
            <person name="Bird D."/>
            <person name="Debono A."/>
            <person name="Durrett T.P."/>
            <person name="Franke R.B."/>
            <person name="Graham I.A."/>
            <person name="Katayama K."/>
            <person name="Kelly A.A."/>
            <person name="Larson T."/>
            <person name="Markham J.E."/>
            <person name="Miquel M."/>
            <person name="Molina I."/>
            <person name="Nishida I."/>
            <person name="Rowland O."/>
            <person name="Samuels L."/>
            <person name="Schmid K.M."/>
            <person name="Wada H."/>
            <person name="Welti R."/>
            <person name="Xu C."/>
            <person name="Zallot R."/>
            <person name="Ohlrogge J."/>
        </authorList>
    </citation>
    <scope>REVIEW</scope>
</reference>
<reference key="7">
    <citation type="journal article" date="2013" name="Plant Physiol.">
        <title>Abundant type III lipid transfer proteins in Arabidopsis tapetum are secreted to the locule and become a constituent of the pollen exine.</title>
        <authorList>
            <person name="Huang M.-D."/>
            <person name="Chen T.-L.L."/>
            <person name="Huang A.H.C."/>
        </authorList>
    </citation>
    <scope>TISSUE SPECIFICITY</scope>
</reference>
<comment type="subcellular location">
    <subcellularLocation>
        <location evidence="1">Endoplasmic reticulum lumen</location>
    </subcellularLocation>
</comment>
<comment type="alternative products">
    <event type="alternative initiation"/>
    <isoform>
        <id>F4JL89-1</id>
        <name>1</name>
        <sequence type="displayed"/>
    </isoform>
    <isoform>
        <id>F4JL89-2</id>
        <name>2</name>
        <sequence type="described" ref="VSP_058491"/>
    </isoform>
</comment>
<comment type="tissue specificity">
    <text evidence="2 3">Tapetum-specific (PubMed:24096413, PubMed:9687065). Also present in pollen (PubMed:24096413).</text>
</comment>
<comment type="similarity">
    <text evidence="6">Belongs to the plant LTP family.</text>
</comment>
<proteinExistence type="evidence at transcript level"/>
<feature type="signal peptide" evidence="1">
    <location>
        <begin position="1"/>
        <end position="20"/>
    </location>
</feature>
<feature type="chain" id="PRO_0000437203" description="Protein ARABIDOPSIS THALIANA ANTHER 7">
    <location>
        <begin position="21"/>
        <end position="140"/>
    </location>
</feature>
<feature type="disulfide bond" evidence="1">
    <location>
        <begin position="29"/>
        <end position="87"/>
    </location>
</feature>
<feature type="disulfide bond" evidence="1">
    <location>
        <begin position="39"/>
        <end position="54"/>
    </location>
</feature>
<feature type="disulfide bond" evidence="1">
    <location>
        <begin position="55"/>
        <end position="111"/>
    </location>
</feature>
<feature type="disulfide bond" evidence="1">
    <location>
        <begin position="85"/>
        <end position="125"/>
    </location>
</feature>
<feature type="splice variant" id="VSP_058491" description="In isoform 2." evidence="6">
    <original>M</original>
    <variation>MHNKLHLRNELITIYIIYRYRFLFVHESYISPSLASVLSSM</variation>
    <location>
        <position position="1"/>
    </location>
</feature>
<name>ATA7_ARATH</name>
<gene>
    <name evidence="5" type="primary">ATA7</name>
    <name evidence="7" type="ordered locus">At4g28395</name>
    <name evidence="6" type="ORF">F20O9</name>
</gene>
<dbReference type="EMBL" id="AF037589">
    <property type="protein sequence ID" value="AAC39503.1"/>
    <property type="molecule type" value="mRNA"/>
</dbReference>
<dbReference type="EMBL" id="AL021749">
    <property type="status" value="NOT_ANNOTATED_CDS"/>
    <property type="molecule type" value="Genomic_DNA"/>
</dbReference>
<dbReference type="EMBL" id="CP002687">
    <property type="protein sequence ID" value="AEE85478.1"/>
    <property type="molecule type" value="Genomic_DNA"/>
</dbReference>
<dbReference type="EMBL" id="AY084401">
    <property type="protein sequence ID" value="AAM60975.1"/>
    <property type="molecule type" value="mRNA"/>
</dbReference>
<dbReference type="RefSeq" id="NP_567807.2">
    <molecule id="F4JL89-2"/>
    <property type="nucleotide sequence ID" value="NM_118981.3"/>
</dbReference>
<dbReference type="SMR" id="F4JL89"/>
<dbReference type="STRING" id="3702.F4JL89"/>
<dbReference type="PaxDb" id="3702-AT4G28395.1"/>
<dbReference type="ProteomicsDB" id="246529">
    <molecule id="F4JL89-1"/>
</dbReference>
<dbReference type="EnsemblPlants" id="AT4G28395.1">
    <molecule id="F4JL89-2"/>
    <property type="protein sequence ID" value="AT4G28395.1"/>
    <property type="gene ID" value="AT4G28395"/>
</dbReference>
<dbReference type="GeneID" id="828956"/>
<dbReference type="Gramene" id="AT4G28395.1">
    <molecule id="F4JL89-2"/>
    <property type="protein sequence ID" value="AT4G28395.1"/>
    <property type="gene ID" value="AT4G28395"/>
</dbReference>
<dbReference type="KEGG" id="ath:AT4G28395"/>
<dbReference type="Araport" id="AT4G28395"/>
<dbReference type="TAIR" id="AT4G28395">
    <property type="gene designation" value="A7"/>
</dbReference>
<dbReference type="eggNOG" id="ENOG502S6VB">
    <property type="taxonomic scope" value="Eukaryota"/>
</dbReference>
<dbReference type="HOGENOM" id="CLU_128423_2_2_1"/>
<dbReference type="InParanoid" id="F4JL89"/>
<dbReference type="OMA" id="TRECCDN"/>
<dbReference type="OrthoDB" id="1876592at2759"/>
<dbReference type="PhylomeDB" id="F4JL89"/>
<dbReference type="PRO" id="PR:F4JL89"/>
<dbReference type="Proteomes" id="UP000006548">
    <property type="component" value="Chromosome 4"/>
</dbReference>
<dbReference type="ExpressionAtlas" id="F4JL89">
    <property type="expression patterns" value="baseline and differential"/>
</dbReference>
<dbReference type="GO" id="GO:0005788">
    <property type="term" value="C:endoplasmic reticulum lumen"/>
    <property type="evidence" value="ECO:0000304"/>
    <property type="project" value="TAIR"/>
</dbReference>
<dbReference type="GO" id="GO:0008289">
    <property type="term" value="F:lipid binding"/>
    <property type="evidence" value="ECO:0007669"/>
    <property type="project" value="InterPro"/>
</dbReference>
<dbReference type="GO" id="GO:0005319">
    <property type="term" value="F:lipid transporter activity"/>
    <property type="evidence" value="ECO:0000250"/>
    <property type="project" value="TAIR"/>
</dbReference>
<dbReference type="GO" id="GO:0048235">
    <property type="term" value="P:pollen sperm cell differentiation"/>
    <property type="evidence" value="ECO:0000304"/>
    <property type="project" value="TAIR"/>
</dbReference>
<dbReference type="CDD" id="cd01960">
    <property type="entry name" value="nsLTP1"/>
    <property type="match status" value="1"/>
</dbReference>
<dbReference type="FunFam" id="1.10.110.10:FF:000014">
    <property type="entry name" value="Protein ARABIDOPSIS THALIANA ANTHER 7"/>
    <property type="match status" value="1"/>
</dbReference>
<dbReference type="Gene3D" id="1.10.110.10">
    <property type="entry name" value="Plant lipid-transfer and hydrophobic proteins"/>
    <property type="match status" value="1"/>
</dbReference>
<dbReference type="InterPro" id="IPR036312">
    <property type="entry name" value="Bifun_inhib/LTP/seed_sf"/>
</dbReference>
<dbReference type="InterPro" id="IPR016140">
    <property type="entry name" value="Bifunc_inhib/LTP/seed_store"/>
</dbReference>
<dbReference type="InterPro" id="IPR000528">
    <property type="entry name" value="Plant_nsLTP"/>
</dbReference>
<dbReference type="PANTHER" id="PTHR33076">
    <property type="entry name" value="NON-SPECIFIC LIPID-TRANSFER PROTEIN 2-RELATED"/>
    <property type="match status" value="1"/>
</dbReference>
<dbReference type="Pfam" id="PF00234">
    <property type="entry name" value="Tryp_alpha_amyl"/>
    <property type="match status" value="1"/>
</dbReference>
<dbReference type="SUPFAM" id="SSF47699">
    <property type="entry name" value="Bifunctional inhibitor/lipid-transfer protein/seed storage 2S albumin"/>
    <property type="match status" value="1"/>
</dbReference>
<accession>F4JL89</accession>
<accession>O49116</accession>
<evidence type="ECO:0000255" key="1"/>
<evidence type="ECO:0000269" key="2">
    <source>
    </source>
</evidence>
<evidence type="ECO:0000269" key="3">
    <source>
    </source>
</evidence>
<evidence type="ECO:0000303" key="4">
    <source>
    </source>
</evidence>
<evidence type="ECO:0000303" key="5">
    <source>
    </source>
</evidence>
<evidence type="ECO:0000305" key="6"/>
<evidence type="ECO:0000312" key="7">
    <source>
        <dbReference type="Araport" id="AT4G28395"/>
    </source>
</evidence>
<keyword id="KW-0024">Alternative initiation</keyword>
<keyword id="KW-1015">Disulfide bond</keyword>
<keyword id="KW-0256">Endoplasmic reticulum</keyword>
<keyword id="KW-1185">Reference proteome</keyword>
<keyword id="KW-0732">Signal</keyword>